<comment type="function">
    <text evidence="3">Transcriptional repressor which forms a core component of the circadian clock. The circadian clock, an internal time-keeping system, regulates various physiological processes through the generation of approximately 24 hour circadian rhythms in gene expression, which are translated into rhythms in metabolism and behavior. It is derived from the Latin roots 'circa' (about) and 'diem' (day) and acts as an important regulator of a wide array of physiological functions including metabolism, sleep, body temperature, blood pressure, endocrine, immune, cardiovascular, and renal function. Consists of two major components: the central clock, residing in the suprachiasmatic nucleus (SCN) of the brain, and the peripheral clocks that are present in nearly every tissue and organ system. Both the central and peripheral clocks can be reset by environmental cues, also known as Zeitgebers (German for 'timegivers'). The predominant Zeitgeber for the central clock is light, which is sensed by retina and signals directly to the SCN. The central clock entrains the peripheral clocks through neuronal and hormonal signals, body temperature and feeding-related cues, aligning all clocks with the external light/dark cycle. Circadian rhythms allow an organism to achieve temporal homeostasis with its environment at the molecular level by regulating gene expression to create a peak of protein expression once every 24 hours to control when a particular physiological process is most active with respect to the solar day. Transcription and translation of core clock components (CLOCK, NPAS2, BMAL1, BMAL2, PER1, PER2, PER3, CRY1 and CRY2) plays a critical role in rhythm generation, whereas delays imposed by post-translational modifications (PTMs) are important for determining the period (tau) of the rhythms (tau refers to the period of a rhythm and is the length, in time, of one complete cycle). A diurnal rhythm is synchronized with the day/night cycle, while the ultradian and infradian rhythms have a period shorter and longer than 24 hours, respectively. Disruptions in the circadian rhythms contribute to the pathology of cardiovascular diseases, cancer, metabolic syndromes and aging. A transcription/translation feedback loop (TTFL) forms the core of the molecular circadian clock mechanism. Transcription factors, CLOCK or NPAS2 and BMAL1 or BMAL2, form the positive limb of the feedback loop, act in the form of a heterodimer and activate the transcription of core clock genes and clock-controlled genes (involved in key metabolic processes), harboring E-box elements (5'-CACGTG-3') within their promoters. The core clock genes: PER1/2/3 and CRY1/2 which are transcriptional repressors form the negative limb of the feedback loop and interact with the CLOCK|NPAS2-BMAL1|BMAL2 heterodimer inhibiting its activity and thereby negatively regulating their own expression. This heterodimer also activates nuclear receptors NR1D1/2 and RORA/B/G, which form a second feedback loop and which activate and repress BMAL1 transcription, respectively. Regulates circadian target genes expression at post-transcriptional levels, but may not be required for the repression at transcriptional level. Controls PER2 protein decay. Represses CRY2 preventing its repression on CLOCK/BMAL1 target genes such as FXYD5 and SCNN1A in kidney and PPARA in liver. Besides its involvement in the maintenance of the circadian clock, has an important function in the regulation of several processes. Participates in the repression of glucocorticoid receptor NR3C1/GR-induced transcriptional activity by reducing the association of NR3C1/GR to glucocorticoid response elements (GREs) by BMAL1:CLOCK. Plays a role in the modulation of the neuroinflammatory state via the regulation of inflammatory mediators release, such as CCL2 and IL6. In spinal astrocytes, negatively regulates the MAPK14/p38 and MAPK8/JNK MAPK cascades as well as the subsequent activation of NFkappaB. Coordinately regulates the expression of multiple genes that are involved in the regulation of renal sodium reabsorption. Can act as gene expression activator in a gene and tissue specific manner, in kidney enhances WNK1 and SLC12A3 expression in collaboration with CLOCK. Modulates hair follicle cycling. Represses the CLOCK-BMAL1 induced transcription of BHLHE40/DEC1.</text>
</comment>
<comment type="subunit">
    <text evidence="2 3 5">Homodimer (By similarity). Component of the circadian core oscillator, which includes the CRY proteins, CLOCK or NPAS2, BMAL1 or BMAL2, CSNK1D and/or CSNK1E, TIMELESS, and the PER proteins (By similarity). Interacts directly with TIMELESS, PER2, PER3, CRY1 and CRY2 (By similarity). Interacts with BMAL1 and CLOCK (By similarity). Interacts with GPRASP1 (By similarity). Interacts (phosphorylated) with BTRC and FBXW11; the interactions trigger proteasomal degradation (By similarity). Interacts with NONO, WDR5 and SFPQ (By similarity). Interacts with USP2 (By similarity). Interacts with HNF4A (By similarity).</text>
</comment>
<comment type="subcellular location">
    <subcellularLocation>
        <location evidence="1">Nucleus</location>
    </subcellularLocation>
    <subcellularLocation>
        <location evidence="1">Cytoplasm</location>
    </subcellularLocation>
    <text evidence="1">Nucleocytoplasmic shuttling is effected by interaction with other circadian core oscillator proteins and/or by phosphorylation. Retention of PER1 in the cytoplasm occurs through PER1-PER2 heterodimer formation. Translocate to the nucleus after phosphorylation by CSNK1D or CSNK1E. Also translocated to the nucleus by CRY1 or CRY2 (By similarity).</text>
</comment>
<comment type="tissue specificity">
    <text evidence="9">Expressed in the brain, mainly in the suprachiasmatic nucleus (SCN). Expression also found in the harderian gland, lung, eye, intestine, liver and skeletal muscle.</text>
</comment>
<comment type="induction">
    <text evidence="9">Exhibits circadian rhythm expression. In the SCN and harderian gland, maximum levels at ZT6. Maximum levels in the eye and liver at ZT12. Under constant darkness, maximum levels, in SCN and harderian gland, during subjective day at CT6. In the eye, maximum levels at CT12. PER1 is highly light-inducible at ZT14 and ZT22.</text>
</comment>
<comment type="PTM">
    <text evidence="3">Phosphorylated on serine residues by CSNK1D, CSNK1E and probably also by CSNK1G2. Phosphorylation by CSNK1D or CSNK1E promotes nuclear location of PER proteins as well as ubiquitination and subsequent degradation. May be dephosphorylated by PP1.</text>
</comment>
<comment type="PTM">
    <text evidence="3">Ubiquitinated; requires phosphorylation by CSNK1E and interaction with BTRC and FBXW11. Deubiquitinated by USP2.</text>
</comment>
<organism>
    <name type="scientific">Spalax judaei</name>
    <name type="common">Judean Mountains blind mole rat</name>
    <name type="synonym">Nannospalax judaei</name>
    <dbReference type="NCBI Taxonomy" id="134510"/>
    <lineage>
        <taxon>Eukaryota</taxon>
        <taxon>Metazoa</taxon>
        <taxon>Chordata</taxon>
        <taxon>Craniata</taxon>
        <taxon>Vertebrata</taxon>
        <taxon>Euteleostomi</taxon>
        <taxon>Mammalia</taxon>
        <taxon>Eutheria</taxon>
        <taxon>Euarchontoglires</taxon>
        <taxon>Glires</taxon>
        <taxon>Rodentia</taxon>
        <taxon>Myomorpha</taxon>
        <taxon>Muroidea</taxon>
        <taxon>Spalacidae</taxon>
        <taxon>Spalacinae</taxon>
        <taxon>Nannospalax</taxon>
    </lineage>
</organism>
<sequence length="1285" mass="135988">MSGPLEGADGGGDPRPGESFCSGGVPSPGAPQHRSCPGPSLADDTDANSNGSSGNESNGHESRGASQRSSHSSSSGNGKDSALLETTESSKSTNSQSPSPPSSSIAYSLLSASSEQDNPSTSGCSSEQSARARTQKELMTALRELKLRLPPGHRGKGRSGTLATLQYALACVKQVQANQEYYQQWSLEEGEPCAMDMSTYTLEELEHITSEYTLRNQDTFSVAVSFLTGRIVYISEQAGVLLRCKRDVFRGARFSELLAPQDVGVFYGSTAPFRLPTWGTGTSAGSGLKDFTQEKSVFCRIRGGPDRDPGPRYHPFRLTPYVTKIRVSDGAPAQPCCLLIAERIHSGYEAPRIPPDKRIFTTRHTPSCLFQDVDERAAPLLGYLPQDLLGAPVLLFLHPEDRPLMLAIHKKILQLAGQPFDHSPIRFCARNGEYVTMDTSWAGFVHPWSRKVAFVLGRHKVRTAPLNEDVFTPPAPSPAPSLDSDIQELSEQIHRLLLQPVHSSSPTGPCGIGPLMSPRPLHSPGSSSDSNGGDAEGPGPPAPVTFQQICKDVHLVKHQGQQLFIESRARPPPRPRLLGKAKGLPCQSLDPELEVVPMPNQAPLALALEEAERKEASSCSYQQINCLDSILRYLESCNIPSTTKRKCASSSSCTASSASDDDKQRTGPVPVGAKKDPSSTVLSGEGASPRKEPVVGGTLSPLTLANKAESVVSITSQCSFSSTIVHVGDKKPPESDIIMMEDLPGLAPGPVPSPAPSPTVAPDPAPDAYRPVGLTKAVLSLHTQKEEQAFLSRFKDLGRLRGLDSSSATPSAPGCHHGPVPPGRRHHCRSKAKRSRHHHTPRAEAPCCVSHPSPVPPSGPWPPPPSTTPFPAVVQPYPLPVFSARGGPQPLPPAPTPMPPATFPTPLVTPMVALVLPNYLFPTPPSYPYGLSQAPVEEPPSPASHSPSPSLTPLTPSPPHHPDSPLFNSRCSSPLQLNLLQLEESPRTEGGAVAGGPGSSAGPPPPTEEAAEPEARLVEVTESSNQDALSGSSDLLELLLQEDSRSGTGSAASGSLGSGLGSGSGSGSHEGGSTSASITRSSQSSHTSKYFGSIDSSEAEAGAVQARIELGDQVIKYVLQDPIWLLMANADQHVMMTYQVPSRDRASVLKQDRERLRTMQKQQPRFSEDQRRELGAVHSWVRKGQLPQALDVMACVDCSSSIQDPGHSDDPLFSELDGLGLEPMEEGGGEGGGGGGGGGEGEGGEEAQAHIGVKVSSSQDSAMDEEEQGGSSSSPALPAEENSTS</sequence>
<name>PER1_SPAJD</name>
<proteinExistence type="evidence at transcript level"/>
<evidence type="ECO:0000250" key="1"/>
<evidence type="ECO:0000250" key="2">
    <source>
        <dbReference type="UniProtKB" id="O15534"/>
    </source>
</evidence>
<evidence type="ECO:0000250" key="3">
    <source>
        <dbReference type="UniProtKB" id="O35973"/>
    </source>
</evidence>
<evidence type="ECO:0000250" key="4">
    <source>
        <dbReference type="UniProtKB" id="O54943"/>
    </source>
</evidence>
<evidence type="ECO:0000250" key="5">
    <source>
        <dbReference type="UniProtKB" id="Q8CHI5"/>
    </source>
</evidence>
<evidence type="ECO:0000255" key="6"/>
<evidence type="ECO:0000255" key="7">
    <source>
        <dbReference type="PROSITE-ProRule" id="PRU00140"/>
    </source>
</evidence>
<evidence type="ECO:0000256" key="8">
    <source>
        <dbReference type="SAM" id="MobiDB-lite"/>
    </source>
</evidence>
<evidence type="ECO:0000269" key="9">
    <source>
    </source>
</evidence>
<reference key="1">
    <citation type="journal article" date="2002" name="Proc. Natl. Acad. Sci. U.S.A.">
        <title>Circadian genes in a blind subterranean mammal II: conservation and uniqueness of the three Period homologs in the blind subterranean mole rat, Spalax ehrenbergi superspecies.</title>
        <authorList>
            <person name="Avivi A."/>
            <person name="Oster H."/>
            <person name="Joel A."/>
            <person name="Albrecht U."/>
            <person name="Nevo E."/>
        </authorList>
    </citation>
    <scope>NUCLEOTIDE SEQUENCE [MRNA]</scope>
    <scope>TISSUE SPECIFICITY</scope>
    <scope>INDUCTION</scope>
    <source>
        <tissue>Brain</tissue>
    </source>
</reference>
<feature type="chain" id="PRO_0000261152" description="Period circadian protein homolog 1">
    <location>
        <begin position="1"/>
        <end position="1285"/>
    </location>
</feature>
<feature type="domain" description="PAS 1" evidence="7">
    <location>
        <begin position="208"/>
        <end position="275"/>
    </location>
</feature>
<feature type="domain" description="PAS 2" evidence="7">
    <location>
        <begin position="348"/>
        <end position="414"/>
    </location>
</feature>
<feature type="domain" description="PAC">
    <location>
        <begin position="422"/>
        <end position="465"/>
    </location>
</feature>
<feature type="region of interest" description="Interaction with BTRC" evidence="2">
    <location>
        <begin position="1"/>
        <end position="151"/>
    </location>
</feature>
<feature type="region of interest" description="Disordered" evidence="8">
    <location>
        <begin position="1"/>
        <end position="134"/>
    </location>
</feature>
<feature type="region of interest" description="Disordered" evidence="8">
    <location>
        <begin position="503"/>
        <end position="544"/>
    </location>
</feature>
<feature type="region of interest" description="Required for phosphorylation by CSNK1E" evidence="1">
    <location>
        <begin position="592"/>
        <end position="811"/>
    </location>
</feature>
<feature type="region of interest" description="Disordered" evidence="8">
    <location>
        <begin position="643"/>
        <end position="694"/>
    </location>
</feature>
<feature type="region of interest" description="Disordered" evidence="8">
    <location>
        <begin position="802"/>
        <end position="867"/>
    </location>
</feature>
<feature type="region of interest" description="Disordered" evidence="8">
    <location>
        <begin position="931"/>
        <end position="1030"/>
    </location>
</feature>
<feature type="region of interest" description="Disordered" evidence="8">
    <location>
        <begin position="1045"/>
        <end position="1091"/>
    </location>
</feature>
<feature type="region of interest" description="CRY binding domain" evidence="1">
    <location>
        <begin position="1142"/>
        <end position="1285"/>
    </location>
</feature>
<feature type="region of interest" description="Disordered" evidence="8">
    <location>
        <begin position="1202"/>
        <end position="1285"/>
    </location>
</feature>
<feature type="short sequence motif" description="Nuclear export signal 1" evidence="4">
    <location>
        <begin position="138"/>
        <end position="147"/>
    </location>
</feature>
<feature type="short sequence motif" description="Nuclear export signal 2" evidence="3">
    <location>
        <begin position="489"/>
        <end position="498"/>
    </location>
</feature>
<feature type="short sequence motif" description="Nuclear localization signal" evidence="3">
    <location>
        <begin position="820"/>
        <end position="836"/>
    </location>
</feature>
<feature type="short sequence motif" description="Nuclear export signal 3" evidence="4">
    <location>
        <begin position="975"/>
        <end position="982"/>
    </location>
</feature>
<feature type="short sequence motif" description="LXXLL">
    <location>
        <begin position="1036"/>
        <end position="1040"/>
    </location>
</feature>
<feature type="compositionally biased region" description="Low complexity" evidence="8">
    <location>
        <begin position="48"/>
        <end position="57"/>
    </location>
</feature>
<feature type="compositionally biased region" description="Low complexity" evidence="8">
    <location>
        <begin position="64"/>
        <end position="115"/>
    </location>
</feature>
<feature type="compositionally biased region" description="Polar residues" evidence="8">
    <location>
        <begin position="116"/>
        <end position="132"/>
    </location>
</feature>
<feature type="compositionally biased region" description="Low complexity" evidence="8">
    <location>
        <begin position="523"/>
        <end position="533"/>
    </location>
</feature>
<feature type="compositionally biased region" description="Low complexity" evidence="8">
    <location>
        <begin position="648"/>
        <end position="658"/>
    </location>
</feature>
<feature type="compositionally biased region" description="Basic residues" evidence="8">
    <location>
        <begin position="823"/>
        <end position="840"/>
    </location>
</feature>
<feature type="compositionally biased region" description="Pro residues" evidence="8">
    <location>
        <begin position="853"/>
        <end position="867"/>
    </location>
</feature>
<feature type="compositionally biased region" description="Low complexity" evidence="8">
    <location>
        <begin position="943"/>
        <end position="954"/>
    </location>
</feature>
<feature type="compositionally biased region" description="Polar residues" evidence="8">
    <location>
        <begin position="967"/>
        <end position="979"/>
    </location>
</feature>
<feature type="compositionally biased region" description="Low complexity" evidence="8">
    <location>
        <begin position="1045"/>
        <end position="1055"/>
    </location>
</feature>
<feature type="compositionally biased region" description="Gly residues" evidence="8">
    <location>
        <begin position="1056"/>
        <end position="1070"/>
    </location>
</feature>
<feature type="compositionally biased region" description="Low complexity" evidence="8">
    <location>
        <begin position="1071"/>
        <end position="1088"/>
    </location>
</feature>
<feature type="compositionally biased region" description="Gly residues" evidence="8">
    <location>
        <begin position="1229"/>
        <end position="1241"/>
    </location>
</feature>
<feature type="compositionally biased region" description="Polar residues" evidence="8">
    <location>
        <begin position="1269"/>
        <end position="1285"/>
    </location>
</feature>
<feature type="modified residue" description="Phosphothreonine; by CSNK1E" evidence="6">
    <location>
        <position position="121"/>
    </location>
</feature>
<feature type="modified residue" description="Phosphoserine; by CSNK1E" evidence="6">
    <location>
        <position position="122"/>
    </location>
</feature>
<feature type="modified residue" description="Phosphoserine; by CSNK1E" evidence="6">
    <location>
        <position position="126"/>
    </location>
</feature>
<feature type="modified residue" description="Phosphoserine" evidence="3">
    <location>
        <position position="657"/>
    </location>
</feature>
<feature type="modified residue" description="Phosphoserine" evidence="3">
    <location>
        <position position="659"/>
    </location>
</feature>
<feature type="modified residue" description="Phosphoserine" evidence="2">
    <location>
        <position position="700"/>
    </location>
</feature>
<feature type="modified residue" description="Phosphoserine" evidence="2">
    <location>
        <position position="811"/>
    </location>
</feature>
<feature type="modified residue" description="Phosphoserine" evidence="2">
    <location>
        <position position="972"/>
    </location>
</feature>
<feature type="modified residue" description="Phosphoserine" evidence="2">
    <location>
        <position position="973"/>
    </location>
</feature>
<keyword id="KW-0090">Biological rhythms</keyword>
<keyword id="KW-0963">Cytoplasm</keyword>
<keyword id="KW-0539">Nucleus</keyword>
<keyword id="KW-0597">Phosphoprotein</keyword>
<keyword id="KW-0677">Repeat</keyword>
<keyword id="KW-0804">Transcription</keyword>
<keyword id="KW-0805">Transcription regulation</keyword>
<keyword id="KW-0832">Ubl conjugation</keyword>
<protein>
    <recommendedName>
        <fullName>Period circadian protein homolog 1</fullName>
        <shortName>sPER1</shortName>
    </recommendedName>
    <alternativeName>
        <fullName>Circadian clock protein PERIOD 1</fullName>
    </alternativeName>
</protein>
<accession>Q8K3T3</accession>
<dbReference type="EMBL" id="AJ345059">
    <property type="protein sequence ID" value="CAC95146.1"/>
    <property type="molecule type" value="mRNA"/>
</dbReference>
<dbReference type="SMR" id="Q8K3T3"/>
<dbReference type="GO" id="GO:0005737">
    <property type="term" value="C:cytoplasm"/>
    <property type="evidence" value="ECO:0007669"/>
    <property type="project" value="UniProtKB-SubCell"/>
</dbReference>
<dbReference type="GO" id="GO:0005634">
    <property type="term" value="C:nucleus"/>
    <property type="evidence" value="ECO:0007669"/>
    <property type="project" value="UniProtKB-SubCell"/>
</dbReference>
<dbReference type="GO" id="GO:0031490">
    <property type="term" value="F:chromatin DNA binding"/>
    <property type="evidence" value="ECO:0000250"/>
    <property type="project" value="UniProtKB"/>
</dbReference>
<dbReference type="GO" id="GO:0000976">
    <property type="term" value="F:transcription cis-regulatory region binding"/>
    <property type="evidence" value="ECO:0007669"/>
    <property type="project" value="TreeGrafter"/>
</dbReference>
<dbReference type="GO" id="GO:0001222">
    <property type="term" value="F:transcription corepressor binding"/>
    <property type="evidence" value="ECO:0007669"/>
    <property type="project" value="TreeGrafter"/>
</dbReference>
<dbReference type="GO" id="GO:0006338">
    <property type="term" value="P:chromatin remodeling"/>
    <property type="evidence" value="ECO:0000250"/>
    <property type="project" value="UniProtKB"/>
</dbReference>
<dbReference type="GO" id="GO:0032922">
    <property type="term" value="P:circadian regulation of gene expression"/>
    <property type="evidence" value="ECO:0000250"/>
    <property type="project" value="UniProtKB"/>
</dbReference>
<dbReference type="GO" id="GO:0043153">
    <property type="term" value="P:entrainment of circadian clock by photoperiod"/>
    <property type="evidence" value="ECO:0000250"/>
    <property type="project" value="UniProtKB"/>
</dbReference>
<dbReference type="GO" id="GO:0043124">
    <property type="term" value="P:negative regulation of canonical NF-kappaB signal transduction"/>
    <property type="evidence" value="ECO:0000250"/>
    <property type="project" value="UniProtKB"/>
</dbReference>
<dbReference type="GO" id="GO:0046329">
    <property type="term" value="P:negative regulation of JNK cascade"/>
    <property type="evidence" value="ECO:0000250"/>
    <property type="project" value="UniProtKB"/>
</dbReference>
<dbReference type="GO" id="GO:2000323">
    <property type="term" value="P:negative regulation of nuclear receptor-mediated glucocorticoid signaling pathway"/>
    <property type="evidence" value="ECO:0000250"/>
    <property type="project" value="UniProtKB"/>
</dbReference>
<dbReference type="GO" id="GO:0000122">
    <property type="term" value="P:negative regulation of transcription by RNA polymerase II"/>
    <property type="evidence" value="ECO:0000250"/>
    <property type="project" value="UniProtKB"/>
</dbReference>
<dbReference type="GO" id="GO:0045944">
    <property type="term" value="P:positive regulation of transcription by RNA polymerase II"/>
    <property type="evidence" value="ECO:0000250"/>
    <property type="project" value="UniProtKB"/>
</dbReference>
<dbReference type="GO" id="GO:0010608">
    <property type="term" value="P:post-transcriptional regulation of gene expression"/>
    <property type="evidence" value="ECO:0000250"/>
    <property type="project" value="UniProtKB"/>
</dbReference>
<dbReference type="GO" id="GO:0042752">
    <property type="term" value="P:regulation of circadian rhythm"/>
    <property type="evidence" value="ECO:0000250"/>
    <property type="project" value="UniProtKB"/>
</dbReference>
<dbReference type="GO" id="GO:1900015">
    <property type="term" value="P:regulation of cytokine production involved in inflammatory response"/>
    <property type="evidence" value="ECO:0000250"/>
    <property type="project" value="UniProtKB"/>
</dbReference>
<dbReference type="GO" id="GO:0042634">
    <property type="term" value="P:regulation of hair cycle"/>
    <property type="evidence" value="ECO:0000250"/>
    <property type="project" value="UniProtKB"/>
</dbReference>
<dbReference type="GO" id="GO:1900744">
    <property type="term" value="P:regulation of p38MAPK cascade"/>
    <property type="evidence" value="ECO:0000250"/>
    <property type="project" value="UniProtKB"/>
</dbReference>
<dbReference type="GO" id="GO:0002028">
    <property type="term" value="P:regulation of sodium ion transport"/>
    <property type="evidence" value="ECO:0000250"/>
    <property type="project" value="UniProtKB"/>
</dbReference>
<dbReference type="CDD" id="cd00130">
    <property type="entry name" value="PAS"/>
    <property type="match status" value="1"/>
</dbReference>
<dbReference type="FunFam" id="3.30.450.20:FF:000013">
    <property type="entry name" value="Period circadian protein homolog 2"/>
    <property type="match status" value="1"/>
</dbReference>
<dbReference type="FunFam" id="3.30.450.20:FF:000004">
    <property type="entry name" value="Period circadian protein homolog 3"/>
    <property type="match status" value="1"/>
</dbReference>
<dbReference type="Gene3D" id="3.30.450.20">
    <property type="entry name" value="PAS domain"/>
    <property type="match status" value="2"/>
</dbReference>
<dbReference type="InterPro" id="IPR000014">
    <property type="entry name" value="PAS"/>
</dbReference>
<dbReference type="InterPro" id="IPR035965">
    <property type="entry name" value="PAS-like_dom_sf"/>
</dbReference>
<dbReference type="InterPro" id="IPR013655">
    <property type="entry name" value="PAS_fold_3"/>
</dbReference>
<dbReference type="InterPro" id="IPR048814">
    <property type="entry name" value="Per1-3_PAS-A"/>
</dbReference>
<dbReference type="InterPro" id="IPR022728">
    <property type="entry name" value="Period_circadian-like_C"/>
</dbReference>
<dbReference type="InterPro" id="IPR050760">
    <property type="entry name" value="Period_circadian_regulator"/>
</dbReference>
<dbReference type="PANTHER" id="PTHR11269">
    <property type="entry name" value="PERIOD CIRCADIAN PROTEIN"/>
    <property type="match status" value="1"/>
</dbReference>
<dbReference type="PANTHER" id="PTHR11269:SF8">
    <property type="entry name" value="PERIOD CIRCADIAN PROTEIN HOMOLOG 1"/>
    <property type="match status" value="1"/>
</dbReference>
<dbReference type="Pfam" id="PF23170">
    <property type="entry name" value="bHLH_PER"/>
    <property type="match status" value="1"/>
</dbReference>
<dbReference type="Pfam" id="PF08447">
    <property type="entry name" value="PAS_3"/>
    <property type="match status" value="1"/>
</dbReference>
<dbReference type="Pfam" id="PF21353">
    <property type="entry name" value="Per3-like_PAS-A"/>
    <property type="match status" value="1"/>
</dbReference>
<dbReference type="Pfam" id="PF12114">
    <property type="entry name" value="Period_C"/>
    <property type="match status" value="1"/>
</dbReference>
<dbReference type="SMART" id="SM00091">
    <property type="entry name" value="PAS"/>
    <property type="match status" value="2"/>
</dbReference>
<dbReference type="SUPFAM" id="SSF55785">
    <property type="entry name" value="PYP-like sensor domain (PAS domain)"/>
    <property type="match status" value="1"/>
</dbReference>
<dbReference type="PROSITE" id="PS50112">
    <property type="entry name" value="PAS"/>
    <property type="match status" value="1"/>
</dbReference>
<gene>
    <name type="primary">PER1</name>
</gene>